<feature type="chain" id="PRO_1000064005" description="2,3-bisphosphoglycerate-independent phosphoglycerate mutase">
    <location>
        <begin position="1"/>
        <end position="514"/>
    </location>
</feature>
<feature type="active site" description="Phosphoserine intermediate" evidence="1">
    <location>
        <position position="64"/>
    </location>
</feature>
<feature type="binding site" evidence="1">
    <location>
        <position position="14"/>
    </location>
    <ligand>
        <name>Mn(2+)</name>
        <dbReference type="ChEBI" id="CHEBI:29035"/>
        <label>2</label>
    </ligand>
</feature>
<feature type="binding site" evidence="1">
    <location>
        <position position="64"/>
    </location>
    <ligand>
        <name>Mn(2+)</name>
        <dbReference type="ChEBI" id="CHEBI:29035"/>
        <label>2</label>
    </ligand>
</feature>
<feature type="binding site" evidence="1">
    <location>
        <position position="125"/>
    </location>
    <ligand>
        <name>substrate</name>
    </ligand>
</feature>
<feature type="binding site" evidence="1">
    <location>
        <begin position="155"/>
        <end position="156"/>
    </location>
    <ligand>
        <name>substrate</name>
    </ligand>
</feature>
<feature type="binding site" evidence="1">
    <location>
        <position position="187"/>
    </location>
    <ligand>
        <name>substrate</name>
    </ligand>
</feature>
<feature type="binding site" evidence="1">
    <location>
        <position position="193"/>
    </location>
    <ligand>
        <name>substrate</name>
    </ligand>
</feature>
<feature type="binding site" evidence="1">
    <location>
        <begin position="263"/>
        <end position="266"/>
    </location>
    <ligand>
        <name>substrate</name>
    </ligand>
</feature>
<feature type="binding site" evidence="1">
    <location>
        <position position="336"/>
    </location>
    <ligand>
        <name>substrate</name>
    </ligand>
</feature>
<feature type="binding site" evidence="1">
    <location>
        <position position="403"/>
    </location>
    <ligand>
        <name>Mn(2+)</name>
        <dbReference type="ChEBI" id="CHEBI:29035"/>
        <label>1</label>
    </ligand>
</feature>
<feature type="binding site" evidence="1">
    <location>
        <position position="407"/>
    </location>
    <ligand>
        <name>Mn(2+)</name>
        <dbReference type="ChEBI" id="CHEBI:29035"/>
        <label>1</label>
    </ligand>
</feature>
<feature type="binding site" evidence="1">
    <location>
        <position position="444"/>
    </location>
    <ligand>
        <name>Mn(2+)</name>
        <dbReference type="ChEBI" id="CHEBI:29035"/>
        <label>2</label>
    </ligand>
</feature>
<feature type="binding site" evidence="1">
    <location>
        <position position="445"/>
    </location>
    <ligand>
        <name>Mn(2+)</name>
        <dbReference type="ChEBI" id="CHEBI:29035"/>
        <label>2</label>
    </ligand>
</feature>
<feature type="binding site" evidence="1">
    <location>
        <position position="463"/>
    </location>
    <ligand>
        <name>Mn(2+)</name>
        <dbReference type="ChEBI" id="CHEBI:29035"/>
        <label>1</label>
    </ligand>
</feature>
<gene>
    <name evidence="1" type="primary">gpmI</name>
    <name type="ordered locus">Sputcn32_0040</name>
</gene>
<sequence>MTTTKRPIALLILDGWGYRENTHMNAIFHAKTPVLDRLNAQYPHGLISGSGLDVGLPDGQMGNSEVGHINLGSGRIVYQELTRISKAISDHEFETNPALCDAVDSAINAGGAVHIMGLLSPGGVHSHEEHIEAMCRMAVARGATKVYLHAFLDGRDTPPRSAKASLSHFDDLFTTLGHGRVASIIGRYFAMDRDNRWDRVSQAYELITQGKAKFQYDNAVTALEAAYARDENDEFVSSSAITDVDGKVATLQDGDALIFMNFRADRARQITRSFIHPDFDGFERAVVPKMHFVTLTEYAGDITAPIAYPSENLVNTLGEVLQNRGRTQLRISETEKYAHVTFFFNGGKEEPFEGEDRILINSPKVATYDLQPEMSSTELTDKLVAAIESTKYDVIICNYPNGDMVGHTGNFDAAVKACEAVDTCIGRVVEALAKVGGECIITADHGNAEQMTDETTGQAHTAHTSELVPFIFVGRDATIDKGGKLSDVAPTILQLIGETIPAEMTGKPLIHIKE</sequence>
<accession>A4Y1E3</accession>
<name>GPMI_SHEPC</name>
<organism>
    <name type="scientific">Shewanella putrefaciens (strain CN-32 / ATCC BAA-453)</name>
    <dbReference type="NCBI Taxonomy" id="319224"/>
    <lineage>
        <taxon>Bacteria</taxon>
        <taxon>Pseudomonadati</taxon>
        <taxon>Pseudomonadota</taxon>
        <taxon>Gammaproteobacteria</taxon>
        <taxon>Alteromonadales</taxon>
        <taxon>Shewanellaceae</taxon>
        <taxon>Shewanella</taxon>
    </lineage>
</organism>
<protein>
    <recommendedName>
        <fullName evidence="1">2,3-bisphosphoglycerate-independent phosphoglycerate mutase</fullName>
        <shortName evidence="1">BPG-independent PGAM</shortName>
        <shortName evidence="1">Phosphoglyceromutase</shortName>
        <shortName evidence="1">iPGM</shortName>
        <ecNumber evidence="1">5.4.2.12</ecNumber>
    </recommendedName>
</protein>
<reference key="1">
    <citation type="submission" date="2007-04" db="EMBL/GenBank/DDBJ databases">
        <title>Complete sequence of Shewanella putrefaciens CN-32.</title>
        <authorList>
            <consortium name="US DOE Joint Genome Institute"/>
            <person name="Copeland A."/>
            <person name="Lucas S."/>
            <person name="Lapidus A."/>
            <person name="Barry K."/>
            <person name="Detter J.C."/>
            <person name="Glavina del Rio T."/>
            <person name="Hammon N."/>
            <person name="Israni S."/>
            <person name="Dalin E."/>
            <person name="Tice H."/>
            <person name="Pitluck S."/>
            <person name="Chain P."/>
            <person name="Malfatti S."/>
            <person name="Shin M."/>
            <person name="Vergez L."/>
            <person name="Schmutz J."/>
            <person name="Larimer F."/>
            <person name="Land M."/>
            <person name="Hauser L."/>
            <person name="Kyrpides N."/>
            <person name="Mikhailova N."/>
            <person name="Romine M.F."/>
            <person name="Fredrickson J."/>
            <person name="Tiedje J."/>
            <person name="Richardson P."/>
        </authorList>
    </citation>
    <scope>NUCLEOTIDE SEQUENCE [LARGE SCALE GENOMIC DNA]</scope>
    <source>
        <strain>CN-32 / ATCC BAA-453</strain>
    </source>
</reference>
<proteinExistence type="inferred from homology"/>
<keyword id="KW-0324">Glycolysis</keyword>
<keyword id="KW-0413">Isomerase</keyword>
<keyword id="KW-0464">Manganese</keyword>
<keyword id="KW-0479">Metal-binding</keyword>
<comment type="function">
    <text evidence="1">Catalyzes the interconversion of 2-phosphoglycerate and 3-phosphoglycerate.</text>
</comment>
<comment type="catalytic activity">
    <reaction evidence="1">
        <text>(2R)-2-phosphoglycerate = (2R)-3-phosphoglycerate</text>
        <dbReference type="Rhea" id="RHEA:15901"/>
        <dbReference type="ChEBI" id="CHEBI:58272"/>
        <dbReference type="ChEBI" id="CHEBI:58289"/>
        <dbReference type="EC" id="5.4.2.12"/>
    </reaction>
</comment>
<comment type="cofactor">
    <cofactor evidence="1">
        <name>Mn(2+)</name>
        <dbReference type="ChEBI" id="CHEBI:29035"/>
    </cofactor>
    <text evidence="1">Binds 2 manganese ions per subunit.</text>
</comment>
<comment type="pathway">
    <text evidence="1">Carbohydrate degradation; glycolysis; pyruvate from D-glyceraldehyde 3-phosphate: step 3/5.</text>
</comment>
<comment type="subunit">
    <text evidence="1">Monomer.</text>
</comment>
<comment type="similarity">
    <text evidence="1">Belongs to the BPG-independent phosphoglycerate mutase family.</text>
</comment>
<evidence type="ECO:0000255" key="1">
    <source>
        <dbReference type="HAMAP-Rule" id="MF_01038"/>
    </source>
</evidence>
<dbReference type="EC" id="5.4.2.12" evidence="1"/>
<dbReference type="EMBL" id="CP000681">
    <property type="protein sequence ID" value="ABP73776.1"/>
    <property type="molecule type" value="Genomic_DNA"/>
</dbReference>
<dbReference type="SMR" id="A4Y1E3"/>
<dbReference type="STRING" id="319224.Sputcn32_0040"/>
<dbReference type="KEGG" id="spc:Sputcn32_0040"/>
<dbReference type="eggNOG" id="COG0696">
    <property type="taxonomic scope" value="Bacteria"/>
</dbReference>
<dbReference type="HOGENOM" id="CLU_026099_2_0_6"/>
<dbReference type="UniPathway" id="UPA00109">
    <property type="reaction ID" value="UER00186"/>
</dbReference>
<dbReference type="GO" id="GO:0005829">
    <property type="term" value="C:cytosol"/>
    <property type="evidence" value="ECO:0007669"/>
    <property type="project" value="TreeGrafter"/>
</dbReference>
<dbReference type="GO" id="GO:0030145">
    <property type="term" value="F:manganese ion binding"/>
    <property type="evidence" value="ECO:0007669"/>
    <property type="project" value="UniProtKB-UniRule"/>
</dbReference>
<dbReference type="GO" id="GO:0004619">
    <property type="term" value="F:phosphoglycerate mutase activity"/>
    <property type="evidence" value="ECO:0007669"/>
    <property type="project" value="UniProtKB-EC"/>
</dbReference>
<dbReference type="GO" id="GO:0006007">
    <property type="term" value="P:glucose catabolic process"/>
    <property type="evidence" value="ECO:0007669"/>
    <property type="project" value="InterPro"/>
</dbReference>
<dbReference type="GO" id="GO:0006096">
    <property type="term" value="P:glycolytic process"/>
    <property type="evidence" value="ECO:0007669"/>
    <property type="project" value="UniProtKB-UniRule"/>
</dbReference>
<dbReference type="CDD" id="cd16010">
    <property type="entry name" value="iPGM"/>
    <property type="match status" value="1"/>
</dbReference>
<dbReference type="FunFam" id="3.40.1450.10:FF:000001">
    <property type="entry name" value="2,3-bisphosphoglycerate-independent phosphoglycerate mutase"/>
    <property type="match status" value="1"/>
</dbReference>
<dbReference type="FunFam" id="3.40.720.10:FF:000001">
    <property type="entry name" value="2,3-bisphosphoglycerate-independent phosphoglycerate mutase"/>
    <property type="match status" value="1"/>
</dbReference>
<dbReference type="Gene3D" id="3.40.720.10">
    <property type="entry name" value="Alkaline Phosphatase, subunit A"/>
    <property type="match status" value="1"/>
</dbReference>
<dbReference type="Gene3D" id="3.40.1450.10">
    <property type="entry name" value="BPG-independent phosphoglycerate mutase, domain B"/>
    <property type="match status" value="1"/>
</dbReference>
<dbReference type="HAMAP" id="MF_01038">
    <property type="entry name" value="GpmI"/>
    <property type="match status" value="1"/>
</dbReference>
<dbReference type="InterPro" id="IPR017850">
    <property type="entry name" value="Alkaline_phosphatase_core_sf"/>
</dbReference>
<dbReference type="InterPro" id="IPR011258">
    <property type="entry name" value="BPG-indep_PGM_N"/>
</dbReference>
<dbReference type="InterPro" id="IPR006124">
    <property type="entry name" value="Metalloenzyme"/>
</dbReference>
<dbReference type="InterPro" id="IPR036646">
    <property type="entry name" value="PGAM_B_sf"/>
</dbReference>
<dbReference type="InterPro" id="IPR005995">
    <property type="entry name" value="Pgm_bpd_ind"/>
</dbReference>
<dbReference type="NCBIfam" id="TIGR01307">
    <property type="entry name" value="pgm_bpd_ind"/>
    <property type="match status" value="1"/>
</dbReference>
<dbReference type="NCBIfam" id="NF003897">
    <property type="entry name" value="PRK05434.1-5"/>
    <property type="match status" value="1"/>
</dbReference>
<dbReference type="PANTHER" id="PTHR31637">
    <property type="entry name" value="2,3-BISPHOSPHOGLYCERATE-INDEPENDENT PHOSPHOGLYCERATE MUTASE"/>
    <property type="match status" value="1"/>
</dbReference>
<dbReference type="PANTHER" id="PTHR31637:SF0">
    <property type="entry name" value="2,3-BISPHOSPHOGLYCERATE-INDEPENDENT PHOSPHOGLYCERATE MUTASE"/>
    <property type="match status" value="1"/>
</dbReference>
<dbReference type="Pfam" id="PF06415">
    <property type="entry name" value="iPGM_N"/>
    <property type="match status" value="1"/>
</dbReference>
<dbReference type="Pfam" id="PF01676">
    <property type="entry name" value="Metalloenzyme"/>
    <property type="match status" value="1"/>
</dbReference>
<dbReference type="PIRSF" id="PIRSF001492">
    <property type="entry name" value="IPGAM"/>
    <property type="match status" value="1"/>
</dbReference>
<dbReference type="SUPFAM" id="SSF64158">
    <property type="entry name" value="2,3-Bisphosphoglycerate-independent phosphoglycerate mutase, substrate-binding domain"/>
    <property type="match status" value="1"/>
</dbReference>
<dbReference type="SUPFAM" id="SSF53649">
    <property type="entry name" value="Alkaline phosphatase-like"/>
    <property type="match status" value="1"/>
</dbReference>